<proteinExistence type="inferred from homology"/>
<comment type="similarity">
    <text evidence="1">Belongs to the CinA family.</text>
</comment>
<comment type="sequence caution" evidence="2">
    <conflict type="erroneous initiation">
        <sequence resource="EMBL-CDS" id="ABV33198"/>
    </conflict>
</comment>
<evidence type="ECO:0000255" key="1">
    <source>
        <dbReference type="HAMAP-Rule" id="MF_00226"/>
    </source>
</evidence>
<evidence type="ECO:0000305" key="2"/>
<protein>
    <recommendedName>
        <fullName evidence="1">CinA-like protein</fullName>
    </recommendedName>
</protein>
<keyword id="KW-1185">Reference proteome</keyword>
<gene>
    <name type="ordered locus">Tlet_0632</name>
</gene>
<organism>
    <name type="scientific">Pseudothermotoga lettingae (strain ATCC BAA-301 / DSM 14385 / NBRC 107922 / TMO)</name>
    <name type="common">Thermotoga lettingae</name>
    <dbReference type="NCBI Taxonomy" id="416591"/>
    <lineage>
        <taxon>Bacteria</taxon>
        <taxon>Thermotogati</taxon>
        <taxon>Thermotogota</taxon>
        <taxon>Thermotogae</taxon>
        <taxon>Thermotogales</taxon>
        <taxon>Thermotogaceae</taxon>
        <taxon>Pseudothermotoga</taxon>
    </lineage>
</organism>
<dbReference type="EMBL" id="CP000812">
    <property type="protein sequence ID" value="ABV33198.1"/>
    <property type="status" value="ALT_INIT"/>
    <property type="molecule type" value="Genomic_DNA"/>
</dbReference>
<dbReference type="RefSeq" id="WP_012002679.1">
    <property type="nucleotide sequence ID" value="NC_009828.1"/>
</dbReference>
<dbReference type="SMR" id="A8F4W4"/>
<dbReference type="STRING" id="416591.Tlet_0632"/>
<dbReference type="KEGG" id="tle:Tlet_0632"/>
<dbReference type="eggNOG" id="COG1058">
    <property type="taxonomic scope" value="Bacteria"/>
</dbReference>
<dbReference type="eggNOG" id="COG1546">
    <property type="taxonomic scope" value="Bacteria"/>
</dbReference>
<dbReference type="HOGENOM" id="CLU_030805_9_3_0"/>
<dbReference type="OrthoDB" id="9801454at2"/>
<dbReference type="Proteomes" id="UP000002016">
    <property type="component" value="Chromosome"/>
</dbReference>
<dbReference type="CDD" id="cd00885">
    <property type="entry name" value="cinA"/>
    <property type="match status" value="1"/>
</dbReference>
<dbReference type="Gene3D" id="3.30.70.2860">
    <property type="match status" value="1"/>
</dbReference>
<dbReference type="Gene3D" id="3.90.950.20">
    <property type="entry name" value="CinA-like"/>
    <property type="match status" value="1"/>
</dbReference>
<dbReference type="Gene3D" id="3.40.980.10">
    <property type="entry name" value="MoaB/Mog-like domain"/>
    <property type="match status" value="1"/>
</dbReference>
<dbReference type="HAMAP" id="MF_00226_B">
    <property type="entry name" value="CinA_B"/>
    <property type="match status" value="1"/>
</dbReference>
<dbReference type="InterPro" id="IPR050101">
    <property type="entry name" value="CinA"/>
</dbReference>
<dbReference type="InterPro" id="IPR036653">
    <property type="entry name" value="CinA-like_C"/>
</dbReference>
<dbReference type="InterPro" id="IPR008136">
    <property type="entry name" value="CinA_C"/>
</dbReference>
<dbReference type="InterPro" id="IPR008135">
    <property type="entry name" value="Competence-induced_CinA"/>
</dbReference>
<dbReference type="InterPro" id="IPR036425">
    <property type="entry name" value="MoaB/Mog-like_dom_sf"/>
</dbReference>
<dbReference type="InterPro" id="IPR001453">
    <property type="entry name" value="MoaB/Mog_dom"/>
</dbReference>
<dbReference type="NCBIfam" id="TIGR00200">
    <property type="entry name" value="cinA_nterm"/>
    <property type="match status" value="1"/>
</dbReference>
<dbReference type="NCBIfam" id="TIGR00177">
    <property type="entry name" value="molyb_syn"/>
    <property type="match status" value="1"/>
</dbReference>
<dbReference type="NCBIfam" id="TIGR00199">
    <property type="entry name" value="PncC_domain"/>
    <property type="match status" value="1"/>
</dbReference>
<dbReference type="NCBIfam" id="NF001813">
    <property type="entry name" value="PRK00549.1"/>
    <property type="match status" value="1"/>
</dbReference>
<dbReference type="PANTHER" id="PTHR13939">
    <property type="entry name" value="NICOTINAMIDE-NUCLEOTIDE AMIDOHYDROLASE PNCC"/>
    <property type="match status" value="1"/>
</dbReference>
<dbReference type="PANTHER" id="PTHR13939:SF0">
    <property type="entry name" value="NMN AMIDOHYDROLASE-LIKE PROTEIN YFAY"/>
    <property type="match status" value="1"/>
</dbReference>
<dbReference type="Pfam" id="PF02464">
    <property type="entry name" value="CinA"/>
    <property type="match status" value="1"/>
</dbReference>
<dbReference type="Pfam" id="PF00994">
    <property type="entry name" value="MoCF_biosynth"/>
    <property type="match status" value="1"/>
</dbReference>
<dbReference type="PIRSF" id="PIRSF006728">
    <property type="entry name" value="CinA"/>
    <property type="match status" value="1"/>
</dbReference>
<dbReference type="SMART" id="SM00852">
    <property type="entry name" value="MoCF_biosynth"/>
    <property type="match status" value="1"/>
</dbReference>
<dbReference type="SUPFAM" id="SSF142433">
    <property type="entry name" value="CinA-like"/>
    <property type="match status" value="1"/>
</dbReference>
<dbReference type="SUPFAM" id="SSF53218">
    <property type="entry name" value="Molybdenum cofactor biosynthesis proteins"/>
    <property type="match status" value="1"/>
</dbReference>
<name>CINAL_PSELT</name>
<accession>A8F4W4</accession>
<sequence length="406" mass="44396">MKTASIITVGSEIIEGIILNTNEKYICYKLTEAGLKVIRTISVDDDIESIKNAVNYSLNDSDVIVLSGGLGPTEDDKTREAIAESLKLKIALNEELKKAIEKRISKYHRYVPSNIAKQAMVIENAKILENHVGSAPGQLVFHKGKILVLLPGPPQELEPMLNNALNEIKPQPDLSTLSMLFFSIPEAELDEIITSIVHDTSVKIATQASYFDGVRVRLSAPKAKAEELTKLSKKIIELTGEKFIGYGNITLEEAVIKLLKKKHQTLSIAESCTGGMISSRLVNIPGASEVFLGAIVAYNNSVKRNILNVSNKILEKYGAVSQQCVAEMAEGVRKIMKSDLALAVSGIAGPTGGSEKKPVGTVYFCIAGESIKDIQRLFYPQQRNVFRSRVSAYGLYLILKCLSNML</sequence>
<feature type="chain" id="PRO_0000336536" description="CinA-like protein">
    <location>
        <begin position="1"/>
        <end position="406"/>
    </location>
</feature>
<reference key="1">
    <citation type="submission" date="2007-08" db="EMBL/GenBank/DDBJ databases">
        <title>Complete sequence of Thermotoga lettingae TMO.</title>
        <authorList>
            <consortium name="US DOE Joint Genome Institute"/>
            <person name="Copeland A."/>
            <person name="Lucas S."/>
            <person name="Lapidus A."/>
            <person name="Barry K."/>
            <person name="Glavina del Rio T."/>
            <person name="Dalin E."/>
            <person name="Tice H."/>
            <person name="Pitluck S."/>
            <person name="Foster B."/>
            <person name="Bruce D."/>
            <person name="Schmutz J."/>
            <person name="Larimer F."/>
            <person name="Land M."/>
            <person name="Hauser L."/>
            <person name="Kyrpides N."/>
            <person name="Mikhailova N."/>
            <person name="Nelson K."/>
            <person name="Gogarten J.P."/>
            <person name="Noll K."/>
            <person name="Richardson P."/>
        </authorList>
    </citation>
    <scope>NUCLEOTIDE SEQUENCE [LARGE SCALE GENOMIC DNA]</scope>
    <source>
        <strain>ATCC BAA-301 / DSM 14385 / NBRC 107922 / TMO</strain>
    </source>
</reference>